<protein>
    <recommendedName>
        <fullName>ATP phosphoribosyltransferase</fullName>
        <shortName>ATP-PRT</shortName>
        <shortName>ATP-PRTase</shortName>
        <ecNumber>2.4.2.17</ecNumber>
    </recommendedName>
</protein>
<reference key="1">
    <citation type="journal article" date="2002" name="J. Bacteriol.">
        <title>Whole-genome comparison of Mycobacterium tuberculosis clinical and laboratory strains.</title>
        <authorList>
            <person name="Fleischmann R.D."/>
            <person name="Alland D."/>
            <person name="Eisen J.A."/>
            <person name="Carpenter L."/>
            <person name="White O."/>
            <person name="Peterson J.D."/>
            <person name="DeBoy R.T."/>
            <person name="Dodson R.J."/>
            <person name="Gwinn M.L."/>
            <person name="Haft D.H."/>
            <person name="Hickey E.K."/>
            <person name="Kolonay J.F."/>
            <person name="Nelson W.C."/>
            <person name="Umayam L.A."/>
            <person name="Ermolaeva M.D."/>
            <person name="Salzberg S.L."/>
            <person name="Delcher A."/>
            <person name="Utterback T.R."/>
            <person name="Weidman J.F."/>
            <person name="Khouri H.M."/>
            <person name="Gill J."/>
            <person name="Mikula A."/>
            <person name="Bishai W."/>
            <person name="Jacobs W.R. Jr."/>
            <person name="Venter J.C."/>
            <person name="Fraser C.M."/>
        </authorList>
    </citation>
    <scope>NUCLEOTIDE SEQUENCE [LARGE SCALE GENOMIC DNA]</scope>
    <source>
        <strain>CDC 1551 / Oshkosh</strain>
    </source>
</reference>
<dbReference type="EC" id="2.4.2.17"/>
<dbReference type="EMBL" id="AE000516">
    <property type="protein sequence ID" value="AAK46464.1"/>
    <property type="molecule type" value="Genomic_DNA"/>
</dbReference>
<dbReference type="PIR" id="D70513">
    <property type="entry name" value="D70513"/>
</dbReference>
<dbReference type="RefSeq" id="WP_003411047.1">
    <property type="nucleotide sequence ID" value="NZ_KK341227.1"/>
</dbReference>
<dbReference type="SMR" id="P9WMN0"/>
<dbReference type="GeneID" id="45426096"/>
<dbReference type="KEGG" id="mtc:MT2181"/>
<dbReference type="PATRIC" id="fig|83331.31.peg.2351"/>
<dbReference type="HOGENOM" id="CLU_038115_1_1_11"/>
<dbReference type="UniPathway" id="UPA00031">
    <property type="reaction ID" value="UER00006"/>
</dbReference>
<dbReference type="Proteomes" id="UP000001020">
    <property type="component" value="Chromosome"/>
</dbReference>
<dbReference type="GO" id="GO:0005737">
    <property type="term" value="C:cytoplasm"/>
    <property type="evidence" value="ECO:0007669"/>
    <property type="project" value="UniProtKB-SubCell"/>
</dbReference>
<dbReference type="GO" id="GO:0005524">
    <property type="term" value="F:ATP binding"/>
    <property type="evidence" value="ECO:0007669"/>
    <property type="project" value="UniProtKB-KW"/>
</dbReference>
<dbReference type="GO" id="GO:0003879">
    <property type="term" value="F:ATP phosphoribosyltransferase activity"/>
    <property type="evidence" value="ECO:0007669"/>
    <property type="project" value="UniProtKB-UniRule"/>
</dbReference>
<dbReference type="GO" id="GO:0000287">
    <property type="term" value="F:magnesium ion binding"/>
    <property type="evidence" value="ECO:0007669"/>
    <property type="project" value="UniProtKB-UniRule"/>
</dbReference>
<dbReference type="GO" id="GO:0000105">
    <property type="term" value="P:L-histidine biosynthetic process"/>
    <property type="evidence" value="ECO:0007669"/>
    <property type="project" value="UniProtKB-UniRule"/>
</dbReference>
<dbReference type="CDD" id="cd13591">
    <property type="entry name" value="PBP2_HisGL1"/>
    <property type="match status" value="1"/>
</dbReference>
<dbReference type="FunFam" id="3.30.70.120:FF:000003">
    <property type="entry name" value="ATP phosphoribosyltransferase"/>
    <property type="match status" value="1"/>
</dbReference>
<dbReference type="FunFam" id="3.40.190.10:FF:000115">
    <property type="entry name" value="ATP phosphoribosyltransferase"/>
    <property type="match status" value="1"/>
</dbReference>
<dbReference type="Gene3D" id="3.30.70.120">
    <property type="match status" value="1"/>
</dbReference>
<dbReference type="Gene3D" id="3.40.190.10">
    <property type="entry name" value="Periplasmic binding protein-like II"/>
    <property type="match status" value="2"/>
</dbReference>
<dbReference type="HAMAP" id="MF_00079">
    <property type="entry name" value="HisG_Long"/>
    <property type="match status" value="1"/>
</dbReference>
<dbReference type="InterPro" id="IPR020621">
    <property type="entry name" value="ATP-PRT_HisG_long"/>
</dbReference>
<dbReference type="InterPro" id="IPR013820">
    <property type="entry name" value="ATP_PRibTrfase_cat"/>
</dbReference>
<dbReference type="InterPro" id="IPR018198">
    <property type="entry name" value="ATP_PRibTrfase_CS"/>
</dbReference>
<dbReference type="InterPro" id="IPR001348">
    <property type="entry name" value="ATP_PRibTrfase_HisG"/>
</dbReference>
<dbReference type="InterPro" id="IPR013115">
    <property type="entry name" value="HisG_C"/>
</dbReference>
<dbReference type="InterPro" id="IPR011322">
    <property type="entry name" value="N-reg_PII-like_a/b"/>
</dbReference>
<dbReference type="InterPro" id="IPR015867">
    <property type="entry name" value="N-reg_PII/ATP_PRibTrfase_C"/>
</dbReference>
<dbReference type="NCBIfam" id="TIGR00070">
    <property type="entry name" value="hisG"/>
    <property type="match status" value="1"/>
</dbReference>
<dbReference type="NCBIfam" id="TIGR03455">
    <property type="entry name" value="HisG_C-term"/>
    <property type="match status" value="1"/>
</dbReference>
<dbReference type="PANTHER" id="PTHR21403:SF8">
    <property type="entry name" value="ATP PHOSPHORIBOSYLTRANSFERASE"/>
    <property type="match status" value="1"/>
</dbReference>
<dbReference type="PANTHER" id="PTHR21403">
    <property type="entry name" value="ATP PHOSPHORIBOSYLTRANSFERASE ATP-PRTASE"/>
    <property type="match status" value="1"/>
</dbReference>
<dbReference type="Pfam" id="PF01634">
    <property type="entry name" value="HisG"/>
    <property type="match status" value="1"/>
</dbReference>
<dbReference type="Pfam" id="PF08029">
    <property type="entry name" value="HisG_C"/>
    <property type="match status" value="1"/>
</dbReference>
<dbReference type="SUPFAM" id="SSF54913">
    <property type="entry name" value="GlnB-like"/>
    <property type="match status" value="1"/>
</dbReference>
<dbReference type="SUPFAM" id="SSF53850">
    <property type="entry name" value="Periplasmic binding protein-like II"/>
    <property type="match status" value="1"/>
</dbReference>
<dbReference type="PROSITE" id="PS01316">
    <property type="entry name" value="ATP_P_PHORIBOSYLTR"/>
    <property type="match status" value="1"/>
</dbReference>
<feature type="chain" id="PRO_0000427275" description="ATP phosphoribosyltransferase">
    <location>
        <begin position="1"/>
        <end position="284"/>
    </location>
</feature>
<sequence>MLRVAVPNKGALSEPATEILAEAGYRRRTDSKDLTVIDPVNNVEFFFLRPKDIAIYVGSGELDFGITGRDLVCDSGAQVRERLALGFGSSSFRYAAPAGRNWTTADLAGMRIATAYPNLVRKDLATKGIEATVIRLDGAVEISVQLGVADAIADVVGSGRTLSQHDLVAFGEPLCDSEAVLIERAGTDGQDQTEARDQLVARVQGVVFGQQYLMLDYDCPRSALKKATAITPGLESPTIAPLADPDWVAIRALVPRRDVNGIMDELAAIGAKAILASDIRFCRF</sequence>
<name>HIS1_MYCTO</name>
<comment type="function">
    <text evidence="1">Catalyzes the condensation of ATP and 5-phosphoribose 1-diphosphate to form N'-(5'-phosphoribosyl)-ATP (PR-ATP). Has a crucial role in the pathway because the rate of histidine biosynthesis seems to be controlled primarily by regulation of HisG enzymatic activity (By similarity).</text>
</comment>
<comment type="catalytic activity">
    <reaction>
        <text>1-(5-phospho-beta-D-ribosyl)-ATP + diphosphate = 5-phospho-alpha-D-ribose 1-diphosphate + ATP</text>
        <dbReference type="Rhea" id="RHEA:18473"/>
        <dbReference type="ChEBI" id="CHEBI:30616"/>
        <dbReference type="ChEBI" id="CHEBI:33019"/>
        <dbReference type="ChEBI" id="CHEBI:58017"/>
        <dbReference type="ChEBI" id="CHEBI:73183"/>
        <dbReference type="EC" id="2.4.2.17"/>
    </reaction>
</comment>
<comment type="cofactor">
    <cofactor evidence="1">
        <name>Mg(2+)</name>
        <dbReference type="ChEBI" id="CHEBI:18420"/>
    </cofactor>
</comment>
<comment type="pathway">
    <text>Amino-acid biosynthesis; L-histidine biosynthesis; L-histidine from 5-phospho-alpha-D-ribose 1-diphosphate: step 1/9.</text>
</comment>
<comment type="subcellular location">
    <subcellularLocation>
        <location evidence="1">Cytoplasm</location>
    </subcellularLocation>
</comment>
<comment type="similarity">
    <text evidence="2">Belongs to the ATP phosphoribosyltransferase family. Long subfamily.</text>
</comment>
<accession>P9WMN0</accession>
<accession>L0TBL0</accession>
<accession>O33256</accession>
<accession>P60759</accession>
<proteinExistence type="inferred from homology"/>
<evidence type="ECO:0000250" key="1"/>
<evidence type="ECO:0000305" key="2"/>
<gene>
    <name type="primary">hisG</name>
    <name type="ordered locus">MT2181</name>
</gene>
<organism>
    <name type="scientific">Mycobacterium tuberculosis (strain CDC 1551 / Oshkosh)</name>
    <dbReference type="NCBI Taxonomy" id="83331"/>
    <lineage>
        <taxon>Bacteria</taxon>
        <taxon>Bacillati</taxon>
        <taxon>Actinomycetota</taxon>
        <taxon>Actinomycetes</taxon>
        <taxon>Mycobacteriales</taxon>
        <taxon>Mycobacteriaceae</taxon>
        <taxon>Mycobacterium</taxon>
        <taxon>Mycobacterium tuberculosis complex</taxon>
    </lineage>
</organism>
<keyword id="KW-0028">Amino-acid biosynthesis</keyword>
<keyword id="KW-0067">ATP-binding</keyword>
<keyword id="KW-0963">Cytoplasm</keyword>
<keyword id="KW-0328">Glycosyltransferase</keyword>
<keyword id="KW-0368">Histidine biosynthesis</keyword>
<keyword id="KW-0460">Magnesium</keyword>
<keyword id="KW-0479">Metal-binding</keyword>
<keyword id="KW-0547">Nucleotide-binding</keyword>
<keyword id="KW-1185">Reference proteome</keyword>
<keyword id="KW-0808">Transferase</keyword>